<reference key="1">
    <citation type="submission" date="1997-09" db="EMBL/GenBank/DDBJ databases">
        <authorList>
            <person name="Affifian F."/>
            <person name="Armugam A."/>
            <person name="Gopalakrishnakone P."/>
            <person name="Tan N.H."/>
            <person name="Tan C.H."/>
            <person name="Jeyaseelan K."/>
        </authorList>
    </citation>
    <scope>NUCLEOTIDE SEQUENCE [MRNA]</scope>
    <source>
        <tissue>Venom gland</tissue>
    </source>
</reference>
<name>3S1A3_NAJSP</name>
<comment type="function">
    <text evidence="3">Binds to muscle nicotinic acetylcholine receptor (nAChR) and inhibit acetylcholine from binding to the receptor, thereby impairing neuromuscular transmission.</text>
</comment>
<comment type="subcellular location">
    <subcellularLocation>
        <location evidence="1">Secreted</location>
    </subcellularLocation>
</comment>
<comment type="tissue specificity">
    <text evidence="4">Expressed by the venom gland.</text>
</comment>
<comment type="similarity">
    <text evidence="4">Belongs to the three-finger toxin family. Short-chain subfamily. Type I alpha-neurotoxin sub-subfamily.</text>
</comment>
<sequence>MKTLLLTLLVVTIVCLDLGYTLECHNQQSSETPTTTGCSGGETNCYKKRWRDHRGYRIERGCGCPSVKKGIEINCCTTDRCNN</sequence>
<feature type="signal peptide" evidence="1">
    <location>
        <begin position="1"/>
        <end position="21"/>
    </location>
</feature>
<feature type="chain" id="PRO_0000035459" description="Alpha-neurotoxin NTX-3">
    <location>
        <begin position="22"/>
        <end position="83"/>
    </location>
</feature>
<feature type="disulfide bond" evidence="2">
    <location>
        <begin position="24"/>
        <end position="45"/>
    </location>
</feature>
<feature type="disulfide bond" evidence="2">
    <location>
        <begin position="38"/>
        <end position="62"/>
    </location>
</feature>
<feature type="disulfide bond" evidence="2">
    <location>
        <begin position="64"/>
        <end position="75"/>
    </location>
</feature>
<feature type="disulfide bond" evidence="2">
    <location>
        <begin position="76"/>
        <end position="81"/>
    </location>
</feature>
<proteinExistence type="inferred from homology"/>
<keyword id="KW-0008">Acetylcholine receptor inhibiting toxin</keyword>
<keyword id="KW-1015">Disulfide bond</keyword>
<keyword id="KW-0872">Ion channel impairing toxin</keyword>
<keyword id="KW-0528">Neurotoxin</keyword>
<keyword id="KW-0629">Postsynaptic neurotoxin</keyword>
<keyword id="KW-0964">Secreted</keyword>
<keyword id="KW-0732">Signal</keyword>
<keyword id="KW-0800">Toxin</keyword>
<protein>
    <recommendedName>
        <fullName>Alpha-neurotoxin NTX-3</fullName>
        <shortName>NTX3</shortName>
    </recommendedName>
</protein>
<accession>O57326</accession>
<dbReference type="EMBL" id="AF023271">
    <property type="protein sequence ID" value="AAC69915.1"/>
    <property type="molecule type" value="mRNA"/>
</dbReference>
<dbReference type="SMR" id="O57326"/>
<dbReference type="GO" id="GO:0005576">
    <property type="term" value="C:extracellular region"/>
    <property type="evidence" value="ECO:0007669"/>
    <property type="project" value="UniProtKB-SubCell"/>
</dbReference>
<dbReference type="GO" id="GO:0030550">
    <property type="term" value="F:acetylcholine receptor inhibitor activity"/>
    <property type="evidence" value="ECO:0007669"/>
    <property type="project" value="UniProtKB-KW"/>
</dbReference>
<dbReference type="GO" id="GO:0099106">
    <property type="term" value="F:ion channel regulator activity"/>
    <property type="evidence" value="ECO:0007669"/>
    <property type="project" value="UniProtKB-KW"/>
</dbReference>
<dbReference type="GO" id="GO:0090729">
    <property type="term" value="F:toxin activity"/>
    <property type="evidence" value="ECO:0007669"/>
    <property type="project" value="UniProtKB-KW"/>
</dbReference>
<dbReference type="CDD" id="cd00206">
    <property type="entry name" value="TFP_snake_toxin"/>
    <property type="match status" value="1"/>
</dbReference>
<dbReference type="FunFam" id="2.10.60.10:FF:000024">
    <property type="entry name" value="Cytotoxin 1"/>
    <property type="match status" value="1"/>
</dbReference>
<dbReference type="Gene3D" id="2.10.60.10">
    <property type="entry name" value="CD59"/>
    <property type="match status" value="1"/>
</dbReference>
<dbReference type="InterPro" id="IPR003571">
    <property type="entry name" value="Snake_3FTx"/>
</dbReference>
<dbReference type="InterPro" id="IPR045860">
    <property type="entry name" value="Snake_toxin-like_sf"/>
</dbReference>
<dbReference type="InterPro" id="IPR018354">
    <property type="entry name" value="Snake_toxin_con_site"/>
</dbReference>
<dbReference type="InterPro" id="IPR054131">
    <property type="entry name" value="Toxin_cobra-type"/>
</dbReference>
<dbReference type="Pfam" id="PF21947">
    <property type="entry name" value="Toxin_cobra-type"/>
    <property type="match status" value="1"/>
</dbReference>
<dbReference type="SUPFAM" id="SSF57302">
    <property type="entry name" value="Snake toxin-like"/>
    <property type="match status" value="1"/>
</dbReference>
<dbReference type="PROSITE" id="PS00272">
    <property type="entry name" value="SNAKE_TOXIN"/>
    <property type="match status" value="1"/>
</dbReference>
<evidence type="ECO:0000250" key="1"/>
<evidence type="ECO:0000250" key="2">
    <source>
        <dbReference type="UniProtKB" id="P0C1Z0"/>
    </source>
</evidence>
<evidence type="ECO:0000250" key="3">
    <source>
        <dbReference type="UniProtKB" id="P60775"/>
    </source>
</evidence>
<evidence type="ECO:0000305" key="4"/>
<organism>
    <name type="scientific">Naja sputatrix</name>
    <name type="common">Malayan spitting cobra</name>
    <name type="synonym">Naja naja sputatrix</name>
    <dbReference type="NCBI Taxonomy" id="33626"/>
    <lineage>
        <taxon>Eukaryota</taxon>
        <taxon>Metazoa</taxon>
        <taxon>Chordata</taxon>
        <taxon>Craniata</taxon>
        <taxon>Vertebrata</taxon>
        <taxon>Euteleostomi</taxon>
        <taxon>Lepidosauria</taxon>
        <taxon>Squamata</taxon>
        <taxon>Bifurcata</taxon>
        <taxon>Unidentata</taxon>
        <taxon>Episquamata</taxon>
        <taxon>Toxicofera</taxon>
        <taxon>Serpentes</taxon>
        <taxon>Colubroidea</taxon>
        <taxon>Elapidae</taxon>
        <taxon>Elapinae</taxon>
        <taxon>Naja</taxon>
    </lineage>
</organism>